<feature type="chain" id="PRO_0000263875" description="Translation initiation factor IF-1">
    <location>
        <begin position="1"/>
        <end position="72"/>
    </location>
</feature>
<feature type="domain" description="S1-like" evidence="1">
    <location>
        <begin position="1"/>
        <end position="72"/>
    </location>
</feature>
<evidence type="ECO:0000255" key="1">
    <source>
        <dbReference type="HAMAP-Rule" id="MF_00075"/>
    </source>
</evidence>
<keyword id="KW-0963">Cytoplasm</keyword>
<keyword id="KW-0396">Initiation factor</keyword>
<keyword id="KW-0648">Protein biosynthesis</keyword>
<keyword id="KW-1185">Reference proteome</keyword>
<keyword id="KW-0694">RNA-binding</keyword>
<keyword id="KW-0699">rRNA-binding</keyword>
<accession>Q1GRU4</accession>
<protein>
    <recommendedName>
        <fullName evidence="1">Translation initiation factor IF-1</fullName>
    </recommendedName>
</protein>
<sequence>MAKEELLEMRGQVVELLPNAMFRVKLENDHEILGHTAGKMRKNRIRVLVGDEVLVELTPYDLTKGRITYRFK</sequence>
<gene>
    <name evidence="1" type="primary">infA</name>
    <name type="ordered locus">Sala_1916</name>
</gene>
<name>IF1_SPHAL</name>
<reference key="1">
    <citation type="journal article" date="2009" name="Proc. Natl. Acad. Sci. U.S.A.">
        <title>The genomic basis of trophic strategy in marine bacteria.</title>
        <authorList>
            <person name="Lauro F.M."/>
            <person name="McDougald D."/>
            <person name="Thomas T."/>
            <person name="Williams T.J."/>
            <person name="Egan S."/>
            <person name="Rice S."/>
            <person name="DeMaere M.Z."/>
            <person name="Ting L."/>
            <person name="Ertan H."/>
            <person name="Johnson J."/>
            <person name="Ferriera S."/>
            <person name="Lapidus A."/>
            <person name="Anderson I."/>
            <person name="Kyrpides N."/>
            <person name="Munk A.C."/>
            <person name="Detter C."/>
            <person name="Han C.S."/>
            <person name="Brown M.V."/>
            <person name="Robb F.T."/>
            <person name="Kjelleberg S."/>
            <person name="Cavicchioli R."/>
        </authorList>
    </citation>
    <scope>NUCLEOTIDE SEQUENCE [LARGE SCALE GENOMIC DNA]</scope>
    <source>
        <strain>DSM 13593 / LMG 18877 / RB2256</strain>
    </source>
</reference>
<dbReference type="EMBL" id="CP000356">
    <property type="protein sequence ID" value="ABF53628.1"/>
    <property type="molecule type" value="Genomic_DNA"/>
</dbReference>
<dbReference type="RefSeq" id="WP_010162480.1">
    <property type="nucleotide sequence ID" value="NC_008048.1"/>
</dbReference>
<dbReference type="SMR" id="Q1GRU4"/>
<dbReference type="STRING" id="317655.Sala_1916"/>
<dbReference type="KEGG" id="sal:Sala_1916"/>
<dbReference type="eggNOG" id="COG0361">
    <property type="taxonomic scope" value="Bacteria"/>
</dbReference>
<dbReference type="HOGENOM" id="CLU_151267_1_0_5"/>
<dbReference type="OrthoDB" id="9803250at2"/>
<dbReference type="Proteomes" id="UP000006578">
    <property type="component" value="Chromosome"/>
</dbReference>
<dbReference type="GO" id="GO:0005829">
    <property type="term" value="C:cytosol"/>
    <property type="evidence" value="ECO:0007669"/>
    <property type="project" value="TreeGrafter"/>
</dbReference>
<dbReference type="GO" id="GO:0043022">
    <property type="term" value="F:ribosome binding"/>
    <property type="evidence" value="ECO:0007669"/>
    <property type="project" value="UniProtKB-UniRule"/>
</dbReference>
<dbReference type="GO" id="GO:0019843">
    <property type="term" value="F:rRNA binding"/>
    <property type="evidence" value="ECO:0007669"/>
    <property type="project" value="UniProtKB-UniRule"/>
</dbReference>
<dbReference type="GO" id="GO:0003743">
    <property type="term" value="F:translation initiation factor activity"/>
    <property type="evidence" value="ECO:0007669"/>
    <property type="project" value="UniProtKB-UniRule"/>
</dbReference>
<dbReference type="CDD" id="cd04451">
    <property type="entry name" value="S1_IF1"/>
    <property type="match status" value="1"/>
</dbReference>
<dbReference type="FunFam" id="2.40.50.140:FF:000002">
    <property type="entry name" value="Translation initiation factor IF-1"/>
    <property type="match status" value="1"/>
</dbReference>
<dbReference type="Gene3D" id="2.40.50.140">
    <property type="entry name" value="Nucleic acid-binding proteins"/>
    <property type="match status" value="1"/>
</dbReference>
<dbReference type="HAMAP" id="MF_00075">
    <property type="entry name" value="IF_1"/>
    <property type="match status" value="1"/>
</dbReference>
<dbReference type="InterPro" id="IPR012340">
    <property type="entry name" value="NA-bd_OB-fold"/>
</dbReference>
<dbReference type="InterPro" id="IPR006196">
    <property type="entry name" value="RNA-binding_domain_S1_IF1"/>
</dbReference>
<dbReference type="InterPro" id="IPR003029">
    <property type="entry name" value="S1_domain"/>
</dbReference>
<dbReference type="InterPro" id="IPR004368">
    <property type="entry name" value="TIF_IF1"/>
</dbReference>
<dbReference type="NCBIfam" id="TIGR00008">
    <property type="entry name" value="infA"/>
    <property type="match status" value="1"/>
</dbReference>
<dbReference type="PANTHER" id="PTHR33370">
    <property type="entry name" value="TRANSLATION INITIATION FACTOR IF-1, CHLOROPLASTIC"/>
    <property type="match status" value="1"/>
</dbReference>
<dbReference type="PANTHER" id="PTHR33370:SF1">
    <property type="entry name" value="TRANSLATION INITIATION FACTOR IF-1, CHLOROPLASTIC"/>
    <property type="match status" value="1"/>
</dbReference>
<dbReference type="Pfam" id="PF01176">
    <property type="entry name" value="eIF-1a"/>
    <property type="match status" value="1"/>
</dbReference>
<dbReference type="SMART" id="SM00316">
    <property type="entry name" value="S1"/>
    <property type="match status" value="1"/>
</dbReference>
<dbReference type="SUPFAM" id="SSF50249">
    <property type="entry name" value="Nucleic acid-binding proteins"/>
    <property type="match status" value="1"/>
</dbReference>
<dbReference type="PROSITE" id="PS50832">
    <property type="entry name" value="S1_IF1_TYPE"/>
    <property type="match status" value="1"/>
</dbReference>
<comment type="function">
    <text evidence="1">One of the essential components for the initiation of protein synthesis. Stabilizes the binding of IF-2 and IF-3 on the 30S subunit to which N-formylmethionyl-tRNA(fMet) subsequently binds. Helps modulate mRNA selection, yielding the 30S pre-initiation complex (PIC). Upon addition of the 50S ribosomal subunit IF-1, IF-2 and IF-3 are released leaving the mature 70S translation initiation complex.</text>
</comment>
<comment type="subunit">
    <text evidence="1">Component of the 30S ribosomal translation pre-initiation complex which assembles on the 30S ribosome in the order IF-2 and IF-3, IF-1 and N-formylmethionyl-tRNA(fMet); mRNA recruitment can occur at any time during PIC assembly.</text>
</comment>
<comment type="subcellular location">
    <subcellularLocation>
        <location evidence="1">Cytoplasm</location>
    </subcellularLocation>
</comment>
<comment type="similarity">
    <text evidence="1">Belongs to the IF-1 family.</text>
</comment>
<organism>
    <name type="scientific">Sphingopyxis alaskensis (strain DSM 13593 / LMG 18877 / RB2256)</name>
    <name type="common">Sphingomonas alaskensis</name>
    <dbReference type="NCBI Taxonomy" id="317655"/>
    <lineage>
        <taxon>Bacteria</taxon>
        <taxon>Pseudomonadati</taxon>
        <taxon>Pseudomonadota</taxon>
        <taxon>Alphaproteobacteria</taxon>
        <taxon>Sphingomonadales</taxon>
        <taxon>Sphingomonadaceae</taxon>
        <taxon>Sphingopyxis</taxon>
    </lineage>
</organism>
<proteinExistence type="inferred from homology"/>